<dbReference type="EMBL" id="CP000759">
    <property type="protein sequence ID" value="ABS16482.1"/>
    <property type="molecule type" value="Genomic_DNA"/>
</dbReference>
<dbReference type="RefSeq" id="WP_012093144.1">
    <property type="nucleotide sequence ID" value="NC_009668.1"/>
</dbReference>
<dbReference type="SMR" id="A6X5H8"/>
<dbReference type="STRING" id="439375.Oant_3776"/>
<dbReference type="KEGG" id="oan:Oant_3776"/>
<dbReference type="PATRIC" id="fig|439375.7.peg.3939"/>
<dbReference type="eggNOG" id="COG2060">
    <property type="taxonomic scope" value="Bacteria"/>
</dbReference>
<dbReference type="HOGENOM" id="CLU_018614_3_0_5"/>
<dbReference type="Proteomes" id="UP000002301">
    <property type="component" value="Chromosome 2"/>
</dbReference>
<dbReference type="GO" id="GO:0005886">
    <property type="term" value="C:plasma membrane"/>
    <property type="evidence" value="ECO:0007669"/>
    <property type="project" value="UniProtKB-SubCell"/>
</dbReference>
<dbReference type="GO" id="GO:0008556">
    <property type="term" value="F:P-type potassium transmembrane transporter activity"/>
    <property type="evidence" value="ECO:0007669"/>
    <property type="project" value="InterPro"/>
</dbReference>
<dbReference type="GO" id="GO:0030955">
    <property type="term" value="F:potassium ion binding"/>
    <property type="evidence" value="ECO:0007669"/>
    <property type="project" value="UniProtKB-UniRule"/>
</dbReference>
<dbReference type="HAMAP" id="MF_00275">
    <property type="entry name" value="KdpA"/>
    <property type="match status" value="1"/>
</dbReference>
<dbReference type="InterPro" id="IPR004623">
    <property type="entry name" value="KdpA"/>
</dbReference>
<dbReference type="NCBIfam" id="TIGR00680">
    <property type="entry name" value="kdpA"/>
    <property type="match status" value="1"/>
</dbReference>
<dbReference type="PANTHER" id="PTHR30607">
    <property type="entry name" value="POTASSIUM-TRANSPORTING ATPASE A CHAIN"/>
    <property type="match status" value="1"/>
</dbReference>
<dbReference type="PANTHER" id="PTHR30607:SF2">
    <property type="entry name" value="POTASSIUM-TRANSPORTING ATPASE POTASSIUM-BINDING SUBUNIT"/>
    <property type="match status" value="1"/>
</dbReference>
<dbReference type="Pfam" id="PF03814">
    <property type="entry name" value="KdpA"/>
    <property type="match status" value="1"/>
</dbReference>
<dbReference type="PIRSF" id="PIRSF001294">
    <property type="entry name" value="K_ATPaseA"/>
    <property type="match status" value="1"/>
</dbReference>
<reference key="1">
    <citation type="journal article" date="2011" name="J. Bacteriol.">
        <title>Genome of Ochrobactrum anthropi ATCC 49188 T, a versatile opportunistic pathogen and symbiont of several eukaryotic hosts.</title>
        <authorList>
            <person name="Chain P.S."/>
            <person name="Lang D.M."/>
            <person name="Comerci D.J."/>
            <person name="Malfatti S.A."/>
            <person name="Vergez L.M."/>
            <person name="Shin M."/>
            <person name="Ugalde R.A."/>
            <person name="Garcia E."/>
            <person name="Tolmasky M.E."/>
        </authorList>
    </citation>
    <scope>NUCLEOTIDE SEQUENCE [LARGE SCALE GENOMIC DNA]</scope>
    <source>
        <strain>ATCC 49188 / DSM 6882 / CCUG 24695 / JCM 21032 / LMG 3331 / NBRC 15819 / NCTC 12168 / Alc 37</strain>
    </source>
</reference>
<organism>
    <name type="scientific">Brucella anthropi (strain ATCC 49188 / DSM 6882 / CCUG 24695 / JCM 21032 / LMG 3331 / NBRC 15819 / NCTC 12168 / Alc 37)</name>
    <name type="common">Ochrobactrum anthropi</name>
    <dbReference type="NCBI Taxonomy" id="439375"/>
    <lineage>
        <taxon>Bacteria</taxon>
        <taxon>Pseudomonadati</taxon>
        <taxon>Pseudomonadota</taxon>
        <taxon>Alphaproteobacteria</taxon>
        <taxon>Hyphomicrobiales</taxon>
        <taxon>Brucellaceae</taxon>
        <taxon>Brucella/Ochrobactrum group</taxon>
        <taxon>Brucella</taxon>
    </lineage>
</organism>
<feature type="chain" id="PRO_1000078784" description="Potassium-transporting ATPase potassium-binding subunit">
    <location>
        <begin position="1"/>
        <end position="567"/>
    </location>
</feature>
<feature type="transmembrane region" description="Helical" evidence="1">
    <location>
        <begin position="5"/>
        <end position="25"/>
    </location>
</feature>
<feature type="transmembrane region" description="Helical" evidence="1">
    <location>
        <begin position="64"/>
        <end position="84"/>
    </location>
</feature>
<feature type="transmembrane region" description="Helical" evidence="1">
    <location>
        <begin position="136"/>
        <end position="156"/>
    </location>
</feature>
<feature type="transmembrane region" description="Helical" evidence="1">
    <location>
        <begin position="179"/>
        <end position="199"/>
    </location>
</feature>
<feature type="transmembrane region" description="Helical" evidence="1">
    <location>
        <begin position="254"/>
        <end position="274"/>
    </location>
</feature>
<feature type="transmembrane region" description="Helical" evidence="1">
    <location>
        <begin position="285"/>
        <end position="305"/>
    </location>
</feature>
<feature type="transmembrane region" description="Helical" evidence="1">
    <location>
        <begin position="332"/>
        <end position="352"/>
    </location>
</feature>
<feature type="transmembrane region" description="Helical" evidence="1">
    <location>
        <begin position="359"/>
        <end position="376"/>
    </location>
</feature>
<feature type="transmembrane region" description="Helical" evidence="1">
    <location>
        <begin position="421"/>
        <end position="441"/>
    </location>
</feature>
<feature type="transmembrane region" description="Helical" evidence="1">
    <location>
        <begin position="486"/>
        <end position="506"/>
    </location>
</feature>
<feature type="transmembrane region" description="Helical" evidence="1">
    <location>
        <begin position="529"/>
        <end position="549"/>
    </location>
</feature>
<sequence length="567" mass="59654">MTINGWIQILVFCGIIILLVKPLGGYMTRVFGGERTLLSPVLVPVERGLYRLAGTTEREEQHWTTYAASLLLFNLAGFLLLYMLQRFQGSLPFNPMGMSDVPADLAFNTTASFVTNTNWQNYGGESTMSYLTQMAGLTVQNFVSAATGVAIAIALIRAFSRKSMKTLGNFWVDLTRCTLYVLLPLCIILTLAFVSLGVPQTIGVYAEATTLEGARQVIALGPVASQLAIKMLGTNGGGFFNANSAHPFENPDAISNMIQMVAIFAIGASLTNVFGRMVGNERQGWAIFAAMGILFVAGVAICYWAEAAGNPLIHALSVDGGNMEGKETRFGIAMSALFAVVTTAASCGAVIAMHDSMMALGGMIPMINMMLGEIIIGGVGAGFYGIVLFVVVAVFVAGLMVGRTPEYLGKKIEAKEVKMAMLAVLCLPLSILGFTAIASVIPTGLASIANPGPHGFSEILYAYTSGTANNGSAFGGLSGNTPWYNITIGLAMLMGRFLVILPAMAIAGSLVAKKAAPQSAGTFPTTGPLFVGLLIGVILVVGGLIFFPALALGPIAEHLAMIKGQMF</sequence>
<comment type="function">
    <text evidence="1">Part of the high-affinity ATP-driven potassium transport (or Kdp) system, which catalyzes the hydrolysis of ATP coupled with the electrogenic transport of potassium into the cytoplasm. This subunit binds the periplasmic potassium ions and delivers the ions to the membrane domain of KdpB through an intramembrane tunnel.</text>
</comment>
<comment type="subunit">
    <text evidence="1">The system is composed of three essential subunits: KdpA, KdpB and KdpC.</text>
</comment>
<comment type="subcellular location">
    <subcellularLocation>
        <location evidence="1">Cell inner membrane</location>
        <topology evidence="1">Multi-pass membrane protein</topology>
    </subcellularLocation>
</comment>
<comment type="similarity">
    <text evidence="1">Belongs to the KdpA family.</text>
</comment>
<evidence type="ECO:0000255" key="1">
    <source>
        <dbReference type="HAMAP-Rule" id="MF_00275"/>
    </source>
</evidence>
<proteinExistence type="inferred from homology"/>
<name>KDPA_BRUA4</name>
<keyword id="KW-0997">Cell inner membrane</keyword>
<keyword id="KW-1003">Cell membrane</keyword>
<keyword id="KW-0406">Ion transport</keyword>
<keyword id="KW-0472">Membrane</keyword>
<keyword id="KW-0630">Potassium</keyword>
<keyword id="KW-0633">Potassium transport</keyword>
<keyword id="KW-1185">Reference proteome</keyword>
<keyword id="KW-0812">Transmembrane</keyword>
<keyword id="KW-1133">Transmembrane helix</keyword>
<keyword id="KW-0813">Transport</keyword>
<gene>
    <name evidence="1" type="primary">kdpA</name>
    <name type="ordered locus">Oant_3776</name>
</gene>
<accession>A6X5H8</accession>
<protein>
    <recommendedName>
        <fullName evidence="1">Potassium-transporting ATPase potassium-binding subunit</fullName>
    </recommendedName>
    <alternativeName>
        <fullName evidence="1">ATP phosphohydrolase [potassium-transporting] A chain</fullName>
    </alternativeName>
    <alternativeName>
        <fullName evidence="1">Potassium-binding and translocating subunit A</fullName>
    </alternativeName>
    <alternativeName>
        <fullName evidence="1">Potassium-translocating ATPase A chain</fullName>
    </alternativeName>
</protein>